<gene>
    <name evidence="1" type="primary">acpP</name>
    <name type="ordered locus">mma_1359</name>
</gene>
<dbReference type="EMBL" id="CP000269">
    <property type="protein sequence ID" value="ABR91725.1"/>
    <property type="molecule type" value="Genomic_DNA"/>
</dbReference>
<dbReference type="RefSeq" id="WP_009664389.1">
    <property type="nucleotide sequence ID" value="NC_009659.1"/>
</dbReference>
<dbReference type="SMR" id="A6SXQ2"/>
<dbReference type="STRING" id="375286.mma_1359"/>
<dbReference type="KEGG" id="mms:mma_1359"/>
<dbReference type="eggNOG" id="COG0236">
    <property type="taxonomic scope" value="Bacteria"/>
</dbReference>
<dbReference type="HOGENOM" id="CLU_108696_5_1_4"/>
<dbReference type="OrthoDB" id="9804551at2"/>
<dbReference type="UniPathway" id="UPA00094"/>
<dbReference type="Proteomes" id="UP000006388">
    <property type="component" value="Chromosome"/>
</dbReference>
<dbReference type="GO" id="GO:0005829">
    <property type="term" value="C:cytosol"/>
    <property type="evidence" value="ECO:0007669"/>
    <property type="project" value="TreeGrafter"/>
</dbReference>
<dbReference type="GO" id="GO:0016020">
    <property type="term" value="C:membrane"/>
    <property type="evidence" value="ECO:0007669"/>
    <property type="project" value="GOC"/>
</dbReference>
<dbReference type="GO" id="GO:0000035">
    <property type="term" value="F:acyl binding"/>
    <property type="evidence" value="ECO:0007669"/>
    <property type="project" value="TreeGrafter"/>
</dbReference>
<dbReference type="GO" id="GO:0000036">
    <property type="term" value="F:acyl carrier activity"/>
    <property type="evidence" value="ECO:0007669"/>
    <property type="project" value="UniProtKB-UniRule"/>
</dbReference>
<dbReference type="GO" id="GO:0009245">
    <property type="term" value="P:lipid A biosynthetic process"/>
    <property type="evidence" value="ECO:0007669"/>
    <property type="project" value="TreeGrafter"/>
</dbReference>
<dbReference type="FunFam" id="1.10.1200.10:FF:000001">
    <property type="entry name" value="Acyl carrier protein"/>
    <property type="match status" value="1"/>
</dbReference>
<dbReference type="Gene3D" id="1.10.1200.10">
    <property type="entry name" value="ACP-like"/>
    <property type="match status" value="1"/>
</dbReference>
<dbReference type="HAMAP" id="MF_01217">
    <property type="entry name" value="Acyl_carrier"/>
    <property type="match status" value="1"/>
</dbReference>
<dbReference type="InterPro" id="IPR003231">
    <property type="entry name" value="ACP"/>
</dbReference>
<dbReference type="InterPro" id="IPR036736">
    <property type="entry name" value="ACP-like_sf"/>
</dbReference>
<dbReference type="InterPro" id="IPR009081">
    <property type="entry name" value="PP-bd_ACP"/>
</dbReference>
<dbReference type="InterPro" id="IPR006162">
    <property type="entry name" value="Ppantetheine_attach_site"/>
</dbReference>
<dbReference type="NCBIfam" id="TIGR00517">
    <property type="entry name" value="acyl_carrier"/>
    <property type="match status" value="1"/>
</dbReference>
<dbReference type="NCBIfam" id="NF002148">
    <property type="entry name" value="PRK00982.1-2"/>
    <property type="match status" value="1"/>
</dbReference>
<dbReference type="NCBIfam" id="NF002149">
    <property type="entry name" value="PRK00982.1-3"/>
    <property type="match status" value="1"/>
</dbReference>
<dbReference type="NCBIfam" id="NF002150">
    <property type="entry name" value="PRK00982.1-4"/>
    <property type="match status" value="1"/>
</dbReference>
<dbReference type="NCBIfam" id="NF002151">
    <property type="entry name" value="PRK00982.1-5"/>
    <property type="match status" value="1"/>
</dbReference>
<dbReference type="PANTHER" id="PTHR20863">
    <property type="entry name" value="ACYL CARRIER PROTEIN"/>
    <property type="match status" value="1"/>
</dbReference>
<dbReference type="PANTHER" id="PTHR20863:SF76">
    <property type="entry name" value="CARRIER DOMAIN-CONTAINING PROTEIN"/>
    <property type="match status" value="1"/>
</dbReference>
<dbReference type="Pfam" id="PF00550">
    <property type="entry name" value="PP-binding"/>
    <property type="match status" value="1"/>
</dbReference>
<dbReference type="SUPFAM" id="SSF47336">
    <property type="entry name" value="ACP-like"/>
    <property type="match status" value="1"/>
</dbReference>
<dbReference type="PROSITE" id="PS50075">
    <property type="entry name" value="CARRIER"/>
    <property type="match status" value="1"/>
</dbReference>
<dbReference type="PROSITE" id="PS00012">
    <property type="entry name" value="PHOSPHOPANTETHEINE"/>
    <property type="match status" value="1"/>
</dbReference>
<name>ACP_JANMA</name>
<comment type="function">
    <text evidence="1">Carrier of the growing fatty acid chain in fatty acid biosynthesis.</text>
</comment>
<comment type="pathway">
    <text evidence="1">Lipid metabolism; fatty acid biosynthesis.</text>
</comment>
<comment type="subcellular location">
    <subcellularLocation>
        <location evidence="1">Cytoplasm</location>
    </subcellularLocation>
</comment>
<comment type="PTM">
    <text evidence="1">4'-phosphopantetheine is transferred from CoA to a specific serine of apo-ACP by AcpS. This modification is essential for activity because fatty acids are bound in thioester linkage to the sulfhydryl of the prosthetic group.</text>
</comment>
<comment type="similarity">
    <text evidence="1">Belongs to the acyl carrier protein (ACP) family.</text>
</comment>
<organism>
    <name type="scientific">Janthinobacterium sp. (strain Marseille)</name>
    <name type="common">Minibacterium massiliensis</name>
    <dbReference type="NCBI Taxonomy" id="375286"/>
    <lineage>
        <taxon>Bacteria</taxon>
        <taxon>Pseudomonadati</taxon>
        <taxon>Pseudomonadota</taxon>
        <taxon>Betaproteobacteria</taxon>
        <taxon>Burkholderiales</taxon>
        <taxon>Oxalobacteraceae</taxon>
        <taxon>Janthinobacterium</taxon>
    </lineage>
</organism>
<proteinExistence type="inferred from homology"/>
<feature type="chain" id="PRO_1000066626" description="Acyl carrier protein">
    <location>
        <begin position="1"/>
        <end position="79"/>
    </location>
</feature>
<feature type="domain" description="Carrier" evidence="2">
    <location>
        <begin position="2"/>
        <end position="77"/>
    </location>
</feature>
<feature type="modified residue" description="O-(pantetheine 4'-phosphoryl)serine" evidence="2">
    <location>
        <position position="37"/>
    </location>
</feature>
<accession>A6SXQ2</accession>
<reference key="1">
    <citation type="journal article" date="2007" name="PLoS Genet.">
        <title>Genome analysis of Minibacterium massiliensis highlights the convergent evolution of water-living bacteria.</title>
        <authorList>
            <person name="Audic S."/>
            <person name="Robert C."/>
            <person name="Campagna B."/>
            <person name="Parinello H."/>
            <person name="Claverie J.-M."/>
            <person name="Raoult D."/>
            <person name="Drancourt M."/>
        </authorList>
    </citation>
    <scope>NUCLEOTIDE SEQUENCE [LARGE SCALE GENOMIC DNA]</scope>
    <source>
        <strain>Marseille</strain>
    </source>
</reference>
<evidence type="ECO:0000255" key="1">
    <source>
        <dbReference type="HAMAP-Rule" id="MF_01217"/>
    </source>
</evidence>
<evidence type="ECO:0000255" key="2">
    <source>
        <dbReference type="PROSITE-ProRule" id="PRU00258"/>
    </source>
</evidence>
<protein>
    <recommendedName>
        <fullName evidence="1">Acyl carrier protein</fullName>
        <shortName evidence="1">ACP</shortName>
    </recommendedName>
</protein>
<keyword id="KW-0963">Cytoplasm</keyword>
<keyword id="KW-0275">Fatty acid biosynthesis</keyword>
<keyword id="KW-0276">Fatty acid metabolism</keyword>
<keyword id="KW-0444">Lipid biosynthesis</keyword>
<keyword id="KW-0443">Lipid metabolism</keyword>
<keyword id="KW-0596">Phosphopantetheine</keyword>
<keyword id="KW-0597">Phosphoprotein</keyword>
<sequence>MSDIEQRVKKIVAEQLGVAEADIKIESSFVDDLGADSLDTVELVMALEDEFEMEIPDEQAEKITTVQQAIDYAKAHVKA</sequence>